<protein>
    <recommendedName>
        <fullName>Adenylate cyclase</fullName>
        <ecNumber evidence="3 4 5 6">4.6.1.1</ecNumber>
    </recommendedName>
    <alternativeName>
        <fullName>ATP pyrophosphate-lyase</fullName>
    </alternativeName>
    <alternativeName>
        <fullName>Adenylyl cyclase</fullName>
    </alternativeName>
</protein>
<keyword id="KW-0002">3D-structure</keyword>
<keyword id="KW-0067">ATP-binding</keyword>
<keyword id="KW-0115">cAMP biosynthesis</keyword>
<keyword id="KW-1003">Cell membrane</keyword>
<keyword id="KW-0456">Lyase</keyword>
<keyword id="KW-0460">Magnesium</keyword>
<keyword id="KW-0464">Manganese</keyword>
<keyword id="KW-0472">Membrane</keyword>
<keyword id="KW-0479">Metal-binding</keyword>
<keyword id="KW-0547">Nucleotide-binding</keyword>
<keyword id="KW-1185">Reference proteome</keyword>
<keyword id="KW-0812">Transmembrane</keyword>
<keyword id="KW-1133">Transmembrane helix</keyword>
<accession>P9WQ35</accession>
<accession>L0TA06</accession>
<accession>O06142</accession>
<accession>O30820</accession>
<accession>P0A4Y0</accession>
<gene>
    <name type="primary">cya</name>
    <name type="ordered locus">Rv1625c</name>
    <name type="ORF">MTCY01B2.17c</name>
</gene>
<proteinExistence type="evidence at protein level"/>
<comment type="catalytic activity">
    <reaction evidence="3 4 5 6">
        <text>ATP = 3',5'-cyclic AMP + diphosphate</text>
        <dbReference type="Rhea" id="RHEA:15389"/>
        <dbReference type="ChEBI" id="CHEBI:30616"/>
        <dbReference type="ChEBI" id="CHEBI:33019"/>
        <dbReference type="ChEBI" id="CHEBI:58165"/>
        <dbReference type="EC" id="4.6.1.1"/>
    </reaction>
</comment>
<comment type="cofactor">
    <cofactor evidence="3 4">
        <name>Mg(2+)</name>
        <dbReference type="ChEBI" id="CHEBI:18420"/>
    </cofactor>
    <cofactor evidence="3 4">
        <name>Mn(2+)</name>
        <dbReference type="ChEBI" id="CHEBI:29035"/>
    </cofactor>
    <text evidence="3 4 6">Binds 1 Mg(2+) ion per subunit (PubMed:25295175). Is also active with manganese ions (in vitro) (PubMed:11431477, PubMed:11447108).</text>
</comment>
<comment type="subunit">
    <text evidence="4 5 6">Homodimer (PubMed:11447108, PubMed:16403515, PubMed:25295175). Can also exist as monomer (PubMed:16403515, PubMed:25295175).</text>
</comment>
<comment type="subcellular location">
    <subcellularLocation>
        <location evidence="3 4">Cell membrane</location>
        <topology evidence="7">Multi-pass membrane protein</topology>
    </subcellularLocation>
</comment>
<comment type="similarity">
    <text evidence="2">Belongs to the adenylyl cyclase class-4/guanylyl cyclase family.</text>
</comment>
<comment type="caution">
    <text evidence="9 10">The structures described in PubMed:16403515 and PubMed:25295175 corresponds to an inactive form, and displays a conformation that alters the position and orientation of the residues that are expected to bind the substrate and the catalytic metal ions.</text>
</comment>
<evidence type="ECO:0000255" key="1"/>
<evidence type="ECO:0000255" key="2">
    <source>
        <dbReference type="PROSITE-ProRule" id="PRU00099"/>
    </source>
</evidence>
<evidence type="ECO:0000269" key="3">
    <source>
    </source>
</evidence>
<evidence type="ECO:0000269" key="4">
    <source>
    </source>
</evidence>
<evidence type="ECO:0000269" key="5">
    <source>
    </source>
</evidence>
<evidence type="ECO:0000269" key="6">
    <source>
    </source>
</evidence>
<evidence type="ECO:0000305" key="7"/>
<evidence type="ECO:0000305" key="8">
    <source>
    </source>
</evidence>
<evidence type="ECO:0000305" key="9">
    <source>
    </source>
</evidence>
<evidence type="ECO:0000305" key="10">
    <source>
    </source>
</evidence>
<evidence type="ECO:0007829" key="11">
    <source>
        <dbReference type="PDB" id="1YK9"/>
    </source>
</evidence>
<evidence type="ECO:0007829" key="12">
    <source>
        <dbReference type="PDB" id="4P2F"/>
    </source>
</evidence>
<evidence type="ECO:0007829" key="13">
    <source>
        <dbReference type="PDB" id="7YZ9"/>
    </source>
</evidence>
<sequence length="443" mass="47370">MAARKCGAPPIAADGSTRRPDCVTAVRTQARAPTQHYAESVARRQRVLTITAWLAVVVTGSFALMQLATGAGGWYIALINVFTAVTFAIVPLLHRFGGLVAPLTFIGTAYVAIFAIGWDVGTDAGAQFFFLVAAALVVLLVGIEHTALAVGLAAVAAGLVIALEFLVPPDTGLQPPWAMSVSFVLTTVSACGVAVATVWFALRDTARAEAVMEAEHDRSEALLANMLPASIAERLKEPERNIIADKYDEASVLFADIVGFTERASSTAPADLVRFLDRLYSAFDELVDQHGLEKIKVSGDSYMVVSGVPRPRPDHTQALADFALDMTNVAAQLKDPRGNPVPLRVGLATGPVVAGVVGSRRFFYDVWGDAVNVASRMESTDSVGQIQVPDEVYERLKDDFVLRERGHINVKGKGVMRTWYLIGRKVAADPGEVRGAEPRTAGV</sequence>
<feature type="chain" id="PRO_0000195727" description="Adenylate cyclase">
    <location>
        <begin position="1"/>
        <end position="443"/>
    </location>
</feature>
<feature type="transmembrane region" description="Helical" evidence="1">
    <location>
        <begin position="47"/>
        <end position="69"/>
    </location>
</feature>
<feature type="transmembrane region" description="Helical" evidence="1">
    <location>
        <begin position="74"/>
        <end position="93"/>
    </location>
</feature>
<feature type="transmembrane region" description="Helical" evidence="1">
    <location>
        <begin position="98"/>
        <end position="120"/>
    </location>
</feature>
<feature type="transmembrane region" description="Helical" evidence="1">
    <location>
        <begin position="124"/>
        <end position="143"/>
    </location>
</feature>
<feature type="transmembrane region" description="Helical" evidence="1">
    <location>
        <begin position="148"/>
        <end position="167"/>
    </location>
</feature>
<feature type="transmembrane region" description="Helical" evidence="1">
    <location>
        <begin position="180"/>
        <end position="202"/>
    </location>
</feature>
<feature type="topological domain" description="Cytoplasmic" evidence="1 8">
    <location>
        <begin position="203"/>
        <end position="443"/>
    </location>
</feature>
<feature type="domain" description="Guanylate cyclase" evidence="2">
    <location>
        <begin position="251"/>
        <end position="378"/>
    </location>
</feature>
<feature type="binding site" evidence="8">
    <location>
        <position position="256"/>
    </location>
    <ligand>
        <name>Mg(2+)</name>
        <dbReference type="ChEBI" id="CHEBI:18420"/>
        <note>catalytic</note>
    </ligand>
</feature>
<feature type="binding site" evidence="8">
    <location>
        <position position="300"/>
    </location>
    <ligand>
        <name>Mg(2+)</name>
        <dbReference type="ChEBI" id="CHEBI:18420"/>
        <note>catalytic</note>
    </ligand>
</feature>
<feature type="mutagenesis site" description="Loss of activity." evidence="3">
    <original>R</original>
    <variation>A</variation>
    <variation>G</variation>
    <location>
        <position position="43"/>
    </location>
</feature>
<feature type="mutagenesis site" description="Almost no loss of activity." evidence="3">
    <original>R</original>
    <variation>K</variation>
    <location>
        <position position="43"/>
    </location>
</feature>
<feature type="mutagenesis site" description="Loss of activity." evidence="3">
    <original>R</original>
    <variation>A</variation>
    <variation>G</variation>
    <location>
        <position position="44"/>
    </location>
</feature>
<feature type="mutagenesis site" description="Almost no loss of activity." evidence="3">
    <original>R</original>
    <variation>K</variation>
    <location>
        <position position="44"/>
    </location>
</feature>
<feature type="mutagenesis site" description="Almost complete loss of enzyme activity." evidence="4">
    <original>D</original>
    <variation>A</variation>
    <location>
        <position position="256"/>
    </location>
</feature>
<feature type="mutagenesis site" description="Decreased enzyme activity." evidence="4">
    <original>K</original>
    <variation>A</variation>
    <location>
        <position position="296"/>
    </location>
</feature>
<feature type="mutagenesis site" description="Strongly decreased enzyme activity. Abolishes homodimerization and strongly decreases enzyme activity; when associated with R-363 and C-365." evidence="5 6">
    <original>K</original>
    <variation>E</variation>
    <location>
        <position position="296"/>
    </location>
</feature>
<feature type="mutagenesis site" description="Almost complete loss of enzyme activity." evidence="4">
    <original>D</original>
    <variation>A</variation>
    <location>
        <position position="300"/>
    </location>
</feature>
<feature type="mutagenesis site" description="Promotes formation of a domain-swapped dimer. Abolishes homodimerization and strongly decreases enzyme activity; when associated with E-296 and C-365." evidence="5 6">
    <original>F</original>
    <variation>R</variation>
    <location>
        <position position="363"/>
    </location>
</feature>
<feature type="mutagenesis site" description="Almost complete loss of enzyme activity." evidence="4">
    <original>D</original>
    <variation>A</variation>
    <location>
        <position position="365"/>
    </location>
</feature>
<feature type="mutagenesis site" description="Abolishes homodimerization and strongly decreases enzyme activitywhen associated with E-296 and R-363." evidence="5">
    <original>D</original>
    <variation>C</variation>
    <location>
        <position position="365"/>
    </location>
</feature>
<feature type="mutagenesis site" description="Almost complete loss of enzyme activity." evidence="4">
    <original>R</original>
    <variation>A</variation>
    <location>
        <position position="376"/>
    </location>
</feature>
<feature type="strand" evidence="13">
    <location>
        <begin position="243"/>
        <end position="257"/>
    </location>
</feature>
<feature type="helix" evidence="13">
    <location>
        <begin position="260"/>
        <end position="266"/>
    </location>
</feature>
<feature type="helix" evidence="13">
    <location>
        <begin position="269"/>
        <end position="290"/>
    </location>
</feature>
<feature type="strand" evidence="13">
    <location>
        <begin position="293"/>
        <end position="298"/>
    </location>
</feature>
<feature type="strand" evidence="13">
    <location>
        <begin position="301"/>
        <end position="310"/>
    </location>
</feature>
<feature type="helix" evidence="13">
    <location>
        <begin position="315"/>
        <end position="332"/>
    </location>
</feature>
<feature type="strand" evidence="11">
    <location>
        <begin position="335"/>
        <end position="337"/>
    </location>
</feature>
<feature type="strand" evidence="13">
    <location>
        <begin position="343"/>
        <end position="356"/>
    </location>
</feature>
<feature type="strand" evidence="13">
    <location>
        <begin position="360"/>
        <end position="362"/>
    </location>
</feature>
<feature type="strand" evidence="13">
    <location>
        <begin position="364"/>
        <end position="368"/>
    </location>
</feature>
<feature type="helix" evidence="13">
    <location>
        <begin position="369"/>
        <end position="379"/>
    </location>
</feature>
<feature type="strand" evidence="13">
    <location>
        <begin position="386"/>
        <end position="389"/>
    </location>
</feature>
<feature type="helix" evidence="13">
    <location>
        <begin position="390"/>
        <end position="396"/>
    </location>
</feature>
<feature type="turn" evidence="13">
    <location>
        <begin position="397"/>
        <end position="399"/>
    </location>
</feature>
<feature type="strand" evidence="13">
    <location>
        <begin position="400"/>
        <end position="404"/>
    </location>
</feature>
<feature type="turn" evidence="12">
    <location>
        <begin position="411"/>
        <end position="413"/>
    </location>
</feature>
<feature type="strand" evidence="13">
    <location>
        <begin position="418"/>
        <end position="424"/>
    </location>
</feature>
<reference key="1">
    <citation type="journal article" date="2001" name="J. Biol. Chem.">
        <title>Eukaryotic-like adenylyl cyclases in Mycobacterium tuberculosis H37Rv: cloning and characterization.</title>
        <authorList>
            <person name="Reddy S.K."/>
            <person name="Kamireddi M."/>
            <person name="Dhanireddy K."/>
            <person name="Young L."/>
            <person name="Davis A."/>
            <person name="Reddy P.T."/>
        </authorList>
    </citation>
    <scope>NUCLEOTIDE SEQUENCE [GENOMIC DNA]</scope>
    <scope>CHARACTERIZATION</scope>
    <scope>CATALYTIC ACTIVITY</scope>
    <scope>COFACTOR</scope>
    <scope>SUBCELLULAR LOCATION</scope>
    <scope>MUTAGENESIS OF ARG-43 AND ARG-44</scope>
    <source>
        <strain>ATCC 25618 / H37Rv</strain>
    </source>
</reference>
<reference key="2">
    <citation type="journal article" date="1998" name="Nature">
        <title>Deciphering the biology of Mycobacterium tuberculosis from the complete genome sequence.</title>
        <authorList>
            <person name="Cole S.T."/>
            <person name="Brosch R."/>
            <person name="Parkhill J."/>
            <person name="Garnier T."/>
            <person name="Churcher C.M."/>
            <person name="Harris D.E."/>
            <person name="Gordon S.V."/>
            <person name="Eiglmeier K."/>
            <person name="Gas S."/>
            <person name="Barry C.E. III"/>
            <person name="Tekaia F."/>
            <person name="Badcock K."/>
            <person name="Basham D."/>
            <person name="Brown D."/>
            <person name="Chillingworth T."/>
            <person name="Connor R."/>
            <person name="Davies R.M."/>
            <person name="Devlin K."/>
            <person name="Feltwell T."/>
            <person name="Gentles S."/>
            <person name="Hamlin N."/>
            <person name="Holroyd S."/>
            <person name="Hornsby T."/>
            <person name="Jagels K."/>
            <person name="Krogh A."/>
            <person name="McLean J."/>
            <person name="Moule S."/>
            <person name="Murphy L.D."/>
            <person name="Oliver S."/>
            <person name="Osborne J."/>
            <person name="Quail M.A."/>
            <person name="Rajandream M.A."/>
            <person name="Rogers J."/>
            <person name="Rutter S."/>
            <person name="Seeger K."/>
            <person name="Skelton S."/>
            <person name="Squares S."/>
            <person name="Squares R."/>
            <person name="Sulston J.E."/>
            <person name="Taylor K."/>
            <person name="Whitehead S."/>
            <person name="Barrell B.G."/>
        </authorList>
    </citation>
    <scope>NUCLEOTIDE SEQUENCE [LARGE SCALE GENOMIC DNA]</scope>
    <source>
        <strain>ATCC 25618 / H37Rv</strain>
    </source>
</reference>
<reference key="3">
    <citation type="journal article" date="2001" name="EMBO J.">
        <title>Adenylyl cyclase Rv1625c of Mycobacterium tuberculosis: a progenitor of mammalian adenylyl cyclases.</title>
        <authorList>
            <person name="Guo Y.L."/>
            <person name="Seebacher T."/>
            <person name="Kurz U."/>
            <person name="Linder J.U."/>
            <person name="Schultz J.E."/>
        </authorList>
    </citation>
    <scope>CHARACTERIZATION</scope>
    <scope>SUBUNIT</scope>
    <scope>CATALYTIC ACTIVITY</scope>
    <scope>COFACTOR</scope>
    <scope>SUBCELLULAR LOCATION</scope>
    <scope>TOPOLOGY</scope>
    <scope>MUTAGENESIS OF ASP-256; LYS-296; ASP-300; ASP-365 AND ARG-376</scope>
</reference>
<reference key="4">
    <citation type="journal article" date="2011" name="Mol. Cell. Proteomics">
        <title>Proteogenomic analysis of Mycobacterium tuberculosis by high resolution mass spectrometry.</title>
        <authorList>
            <person name="Kelkar D.S."/>
            <person name="Kumar D."/>
            <person name="Kumar P."/>
            <person name="Balakrishnan L."/>
            <person name="Muthusamy B."/>
            <person name="Yadav A.K."/>
            <person name="Shrivastava P."/>
            <person name="Marimuthu A."/>
            <person name="Anand S."/>
            <person name="Sundaram H."/>
            <person name="Kingsbury R."/>
            <person name="Harsha H.C."/>
            <person name="Nair B."/>
            <person name="Prasad T.S."/>
            <person name="Chauhan D.S."/>
            <person name="Katoch K."/>
            <person name="Katoch V.M."/>
            <person name="Kumar P."/>
            <person name="Chaerkady R."/>
            <person name="Ramachandran S."/>
            <person name="Dash D."/>
            <person name="Pandey A."/>
        </authorList>
    </citation>
    <scope>IDENTIFICATION BY MASS SPECTROMETRY [LARGE SCALE ANALYSIS]</scope>
    <source>
        <strain>ATCC 25618 / H37Rv</strain>
    </source>
</reference>
<reference key="5">
    <citation type="journal article" date="2006" name="J. Mol. Biol.">
        <title>A structural basis for the role of nucleotide specifying residues in regulating the oligomerization of the Rv1625c adenylyl cyclase from M. tuberculosis.</title>
        <authorList>
            <person name="Ketkar A.D."/>
            <person name="Shenoy A.R."/>
            <person name="Ramagopal U.A."/>
            <person name="Visweswariah S.S."/>
            <person name="Suguna K."/>
        </authorList>
    </citation>
    <scope>X-RAY CRYSTALLOGRAPHY (2.70 ANGSTROMS) OF 240-443 OF INACTIVE CONFORMATION</scope>
    <scope>CATALYTIC ACTIVITY</scope>
    <scope>SUBUNIT</scope>
    <scope>MUTAGENESIS OF LYS-296; PHE-363 AND ASP-365</scope>
</reference>
<reference key="6">
    <citation type="journal article" date="2014" name="IUCrJ">
        <title>New structural forms of a mycobacterial adenylyl cyclase Rv1625c.</title>
        <authorList>
            <person name="Barathy D."/>
            <person name="Mattoo R."/>
            <person name="Visweswariah S."/>
            <person name="Suguna K."/>
        </authorList>
    </citation>
    <scope>X-RAY CRYSTALLOGRAPHY (2.05 ANGSTROMS) OF 212-443 OF INACTIVE CONFORMATION OF MUTANT ARG-363 IN COMPLEX WITH MAGNESIUM</scope>
    <scope>CATALYTIC ACTIVITY</scope>
    <scope>SUBUNIT</scope>
    <scope>MUTAGENESIS OF PHE-363</scope>
</reference>
<organism>
    <name type="scientific">Mycobacterium tuberculosis (strain ATCC 25618 / H37Rv)</name>
    <dbReference type="NCBI Taxonomy" id="83332"/>
    <lineage>
        <taxon>Bacteria</taxon>
        <taxon>Bacillati</taxon>
        <taxon>Actinomycetota</taxon>
        <taxon>Actinomycetes</taxon>
        <taxon>Mycobacteriales</taxon>
        <taxon>Mycobacteriaceae</taxon>
        <taxon>Mycobacterium</taxon>
        <taxon>Mycobacterium tuberculosis complex</taxon>
    </lineage>
</organism>
<dbReference type="EC" id="4.6.1.1" evidence="3 4 5 6"/>
<dbReference type="EMBL" id="AF017731">
    <property type="protein sequence ID" value="AAB70274.1"/>
    <property type="molecule type" value="Genomic_DNA"/>
</dbReference>
<dbReference type="EMBL" id="AL123456">
    <property type="protein sequence ID" value="CCP44389.1"/>
    <property type="molecule type" value="Genomic_DNA"/>
</dbReference>
<dbReference type="PIR" id="G70558">
    <property type="entry name" value="G70558"/>
</dbReference>
<dbReference type="RefSeq" id="NP_216141.2">
    <property type="nucleotide sequence ID" value="NC_000962.3"/>
</dbReference>
<dbReference type="RefSeq" id="WP_003408035.1">
    <property type="nucleotide sequence ID" value="NZ_NVQJ01000016.1"/>
</dbReference>
<dbReference type="PDB" id="1YK9">
    <property type="method" value="X-ray"/>
    <property type="resolution" value="2.70 A"/>
    <property type="chains" value="A=240-443"/>
</dbReference>
<dbReference type="PDB" id="4P2F">
    <property type="method" value="X-ray"/>
    <property type="resolution" value="2.05 A"/>
    <property type="chains" value="A=212-443"/>
</dbReference>
<dbReference type="PDB" id="4P2M">
    <property type="method" value="X-ray"/>
    <property type="resolution" value="2.70 A"/>
    <property type="chains" value="A/B=212-443"/>
</dbReference>
<dbReference type="PDB" id="4P2X">
    <property type="method" value="X-ray"/>
    <property type="resolution" value="2.40 A"/>
    <property type="chains" value="A/B=212-443"/>
</dbReference>
<dbReference type="PDB" id="7YZ9">
    <property type="method" value="X-ray"/>
    <property type="resolution" value="1.97 A"/>
    <property type="chains" value="A=203-429"/>
</dbReference>
<dbReference type="PDB" id="7YZI">
    <property type="method" value="EM"/>
    <property type="resolution" value="3.83 A"/>
    <property type="chains" value="A/B=1-443"/>
</dbReference>
<dbReference type="PDB" id="7YZK">
    <property type="method" value="EM"/>
    <property type="resolution" value="3.57 A"/>
    <property type="chains" value="A/B=1-443"/>
</dbReference>
<dbReference type="PDBsum" id="1YK9"/>
<dbReference type="PDBsum" id="4P2F"/>
<dbReference type="PDBsum" id="4P2M"/>
<dbReference type="PDBsum" id="4P2X"/>
<dbReference type="PDBsum" id="7YZ9"/>
<dbReference type="PDBsum" id="7YZI"/>
<dbReference type="PDBsum" id="7YZK"/>
<dbReference type="EMDB" id="EMD-14388"/>
<dbReference type="SMR" id="P9WQ35"/>
<dbReference type="STRING" id="83332.Rv1625c"/>
<dbReference type="PaxDb" id="83332-Rv1625c"/>
<dbReference type="DNASU" id="888538"/>
<dbReference type="GeneID" id="45425593"/>
<dbReference type="GeneID" id="888538"/>
<dbReference type="KEGG" id="mtu:Rv1625c"/>
<dbReference type="KEGG" id="mtv:RVBD_1625c"/>
<dbReference type="TubercuList" id="Rv1625c"/>
<dbReference type="eggNOG" id="COG2114">
    <property type="taxonomic scope" value="Bacteria"/>
</dbReference>
<dbReference type="InParanoid" id="P9WQ35"/>
<dbReference type="OrthoDB" id="315417at2"/>
<dbReference type="PhylomeDB" id="P9WQ35"/>
<dbReference type="BRENDA" id="4.6.1.1">
    <property type="organism ID" value="25548"/>
</dbReference>
<dbReference type="EvolutionaryTrace" id="P9WQ35"/>
<dbReference type="Proteomes" id="UP000001584">
    <property type="component" value="Chromosome"/>
</dbReference>
<dbReference type="GO" id="GO:0005886">
    <property type="term" value="C:plasma membrane"/>
    <property type="evidence" value="ECO:0000314"/>
    <property type="project" value="MTBBASE"/>
</dbReference>
<dbReference type="GO" id="GO:0004016">
    <property type="term" value="F:adenylate cyclase activity"/>
    <property type="evidence" value="ECO:0000314"/>
    <property type="project" value="MTBBASE"/>
</dbReference>
<dbReference type="GO" id="GO:0005524">
    <property type="term" value="F:ATP binding"/>
    <property type="evidence" value="ECO:0007669"/>
    <property type="project" value="UniProtKB-KW"/>
</dbReference>
<dbReference type="GO" id="GO:0004383">
    <property type="term" value="F:guanylate cyclase activity"/>
    <property type="evidence" value="ECO:0000318"/>
    <property type="project" value="GO_Central"/>
</dbReference>
<dbReference type="GO" id="GO:0000287">
    <property type="term" value="F:magnesium ion binding"/>
    <property type="evidence" value="ECO:0000314"/>
    <property type="project" value="MTBBASE"/>
</dbReference>
<dbReference type="GO" id="GO:0030145">
    <property type="term" value="F:manganese ion binding"/>
    <property type="evidence" value="ECO:0000314"/>
    <property type="project" value="MTBBASE"/>
</dbReference>
<dbReference type="GO" id="GO:0001653">
    <property type="term" value="F:peptide receptor activity"/>
    <property type="evidence" value="ECO:0000318"/>
    <property type="project" value="GO_Central"/>
</dbReference>
<dbReference type="GO" id="GO:0006171">
    <property type="term" value="P:cAMP biosynthetic process"/>
    <property type="evidence" value="ECO:0000314"/>
    <property type="project" value="MTBBASE"/>
</dbReference>
<dbReference type="GO" id="GO:0006182">
    <property type="term" value="P:cGMP biosynthetic process"/>
    <property type="evidence" value="ECO:0000318"/>
    <property type="project" value="GO_Central"/>
</dbReference>
<dbReference type="GO" id="GO:0035556">
    <property type="term" value="P:intracellular signal transduction"/>
    <property type="evidence" value="ECO:0007669"/>
    <property type="project" value="InterPro"/>
</dbReference>
<dbReference type="GO" id="GO:0007168">
    <property type="term" value="P:receptor guanylyl cyclase signaling pathway"/>
    <property type="evidence" value="ECO:0000318"/>
    <property type="project" value="GO_Central"/>
</dbReference>
<dbReference type="CDD" id="cd07302">
    <property type="entry name" value="CHD"/>
    <property type="match status" value="1"/>
</dbReference>
<dbReference type="FunFam" id="3.30.70.1230:FF:000033">
    <property type="entry name" value="Adenylate cyclase"/>
    <property type="match status" value="1"/>
</dbReference>
<dbReference type="Gene3D" id="3.30.70.1230">
    <property type="entry name" value="Nucleotide cyclase"/>
    <property type="match status" value="1"/>
</dbReference>
<dbReference type="InterPro" id="IPR001054">
    <property type="entry name" value="A/G_cyclase"/>
</dbReference>
<dbReference type="InterPro" id="IPR018297">
    <property type="entry name" value="A/G_cyclase_CS"/>
</dbReference>
<dbReference type="InterPro" id="IPR050401">
    <property type="entry name" value="Cyclic_nucleotide_synthase"/>
</dbReference>
<dbReference type="InterPro" id="IPR048432">
    <property type="entry name" value="MASE7"/>
</dbReference>
<dbReference type="InterPro" id="IPR029787">
    <property type="entry name" value="Nucleotide_cyclase"/>
</dbReference>
<dbReference type="PANTHER" id="PTHR11920:SF335">
    <property type="entry name" value="GUANYLATE CYCLASE"/>
    <property type="match status" value="1"/>
</dbReference>
<dbReference type="PANTHER" id="PTHR11920">
    <property type="entry name" value="GUANYLYL CYCLASE"/>
    <property type="match status" value="1"/>
</dbReference>
<dbReference type="Pfam" id="PF00211">
    <property type="entry name" value="Guanylate_cyc"/>
    <property type="match status" value="1"/>
</dbReference>
<dbReference type="Pfam" id="PF20967">
    <property type="entry name" value="MASE7"/>
    <property type="match status" value="1"/>
</dbReference>
<dbReference type="SMART" id="SM00044">
    <property type="entry name" value="CYCc"/>
    <property type="match status" value="1"/>
</dbReference>
<dbReference type="SUPFAM" id="SSF55073">
    <property type="entry name" value="Nucleotide cyclase"/>
    <property type="match status" value="1"/>
</dbReference>
<dbReference type="PROSITE" id="PS00452">
    <property type="entry name" value="GUANYLATE_CYCLASE_1"/>
    <property type="match status" value="1"/>
</dbReference>
<dbReference type="PROSITE" id="PS50125">
    <property type="entry name" value="GUANYLATE_CYCLASE_2"/>
    <property type="match status" value="1"/>
</dbReference>
<name>CYA1_MYCTU</name>